<protein>
    <recommendedName>
        <fullName evidence="1">Large ribosomal subunit protein uL30</fullName>
    </recommendedName>
    <alternativeName>
        <fullName evidence="2">50S ribosomal protein L30</fullName>
    </alternativeName>
</protein>
<accession>A5CXM2</accession>
<proteinExistence type="inferred from homology"/>
<organism>
    <name type="scientific">Vesicomyosocius okutanii subsp. Calyptogena okutanii (strain HA)</name>
    <dbReference type="NCBI Taxonomy" id="412965"/>
    <lineage>
        <taxon>Bacteria</taxon>
        <taxon>Pseudomonadati</taxon>
        <taxon>Pseudomonadota</taxon>
        <taxon>Gammaproteobacteria</taxon>
        <taxon>Candidatus Pseudothioglobaceae</taxon>
        <taxon>Candidatus Vesicomyosocius</taxon>
    </lineage>
</organism>
<sequence>MAKENRTVKKVTTIQKTQVSSKHNTVSVTLVKSFHGRLPSHRETIVGLGLKRINHTKKFKDTSEIRGMINKVSYLLKVEN</sequence>
<evidence type="ECO:0000255" key="1">
    <source>
        <dbReference type="HAMAP-Rule" id="MF_01371"/>
    </source>
</evidence>
<evidence type="ECO:0000305" key="2"/>
<dbReference type="EMBL" id="AP009247">
    <property type="protein sequence ID" value="BAF61317.1"/>
    <property type="molecule type" value="Genomic_DNA"/>
</dbReference>
<dbReference type="RefSeq" id="WP_011929587.1">
    <property type="nucleotide sequence ID" value="NC_009465.1"/>
</dbReference>
<dbReference type="SMR" id="A5CXM2"/>
<dbReference type="STRING" id="412965.COSY_0187"/>
<dbReference type="KEGG" id="vok:COSY_0187"/>
<dbReference type="eggNOG" id="COG1841">
    <property type="taxonomic scope" value="Bacteria"/>
</dbReference>
<dbReference type="HOGENOM" id="CLU_131047_1_0_6"/>
<dbReference type="OrthoDB" id="9812790at2"/>
<dbReference type="Proteomes" id="UP000000247">
    <property type="component" value="Chromosome"/>
</dbReference>
<dbReference type="GO" id="GO:0022625">
    <property type="term" value="C:cytosolic large ribosomal subunit"/>
    <property type="evidence" value="ECO:0007669"/>
    <property type="project" value="TreeGrafter"/>
</dbReference>
<dbReference type="GO" id="GO:0003735">
    <property type="term" value="F:structural constituent of ribosome"/>
    <property type="evidence" value="ECO:0007669"/>
    <property type="project" value="InterPro"/>
</dbReference>
<dbReference type="GO" id="GO:0006412">
    <property type="term" value="P:translation"/>
    <property type="evidence" value="ECO:0007669"/>
    <property type="project" value="UniProtKB-UniRule"/>
</dbReference>
<dbReference type="CDD" id="cd01658">
    <property type="entry name" value="Ribosomal_L30"/>
    <property type="match status" value="1"/>
</dbReference>
<dbReference type="Gene3D" id="3.30.1390.20">
    <property type="entry name" value="Ribosomal protein L30, ferredoxin-like fold domain"/>
    <property type="match status" value="1"/>
</dbReference>
<dbReference type="HAMAP" id="MF_01371_B">
    <property type="entry name" value="Ribosomal_uL30_B"/>
    <property type="match status" value="1"/>
</dbReference>
<dbReference type="InterPro" id="IPR036919">
    <property type="entry name" value="Ribo_uL30_ferredoxin-like_sf"/>
</dbReference>
<dbReference type="InterPro" id="IPR005996">
    <property type="entry name" value="Ribosomal_uL30_bac-type"/>
</dbReference>
<dbReference type="InterPro" id="IPR016082">
    <property type="entry name" value="Ribosomal_uL30_ferredoxin-like"/>
</dbReference>
<dbReference type="NCBIfam" id="TIGR01308">
    <property type="entry name" value="rpmD_bact"/>
    <property type="match status" value="1"/>
</dbReference>
<dbReference type="PANTHER" id="PTHR15892:SF2">
    <property type="entry name" value="LARGE RIBOSOMAL SUBUNIT PROTEIN UL30M"/>
    <property type="match status" value="1"/>
</dbReference>
<dbReference type="PANTHER" id="PTHR15892">
    <property type="entry name" value="MITOCHONDRIAL RIBOSOMAL PROTEIN L30"/>
    <property type="match status" value="1"/>
</dbReference>
<dbReference type="Pfam" id="PF00327">
    <property type="entry name" value="Ribosomal_L30"/>
    <property type="match status" value="1"/>
</dbReference>
<dbReference type="SUPFAM" id="SSF55129">
    <property type="entry name" value="Ribosomal protein L30p/L7e"/>
    <property type="match status" value="1"/>
</dbReference>
<name>RL30_VESOH</name>
<reference key="1">
    <citation type="journal article" date="2007" name="Curr. Biol.">
        <title>Reduced genome of the thioautotrophic intracellular symbiont in a deep-sea clam, Calyptogena okutanii.</title>
        <authorList>
            <person name="Kuwahara H."/>
            <person name="Yoshida T."/>
            <person name="Takaki Y."/>
            <person name="Shimamura S."/>
            <person name="Nishi S."/>
            <person name="Harada M."/>
            <person name="Matsuyama K."/>
            <person name="Takishita K."/>
            <person name="Kawato M."/>
            <person name="Uematsu K."/>
            <person name="Fujiwara Y."/>
            <person name="Sato T."/>
            <person name="Kato C."/>
            <person name="Kitagawa M."/>
            <person name="Kato I."/>
            <person name="Maruyama T."/>
        </authorList>
    </citation>
    <scope>NUCLEOTIDE SEQUENCE [LARGE SCALE GENOMIC DNA]</scope>
    <source>
        <strain>HA</strain>
    </source>
</reference>
<gene>
    <name evidence="1" type="primary">rpmD</name>
    <name type="ordered locus">COSY_0187</name>
</gene>
<feature type="chain" id="PRO_0000347151" description="Large ribosomal subunit protein uL30">
    <location>
        <begin position="1"/>
        <end position="80"/>
    </location>
</feature>
<keyword id="KW-1185">Reference proteome</keyword>
<keyword id="KW-0687">Ribonucleoprotein</keyword>
<keyword id="KW-0689">Ribosomal protein</keyword>
<comment type="subunit">
    <text evidence="1">Part of the 50S ribosomal subunit.</text>
</comment>
<comment type="similarity">
    <text evidence="1">Belongs to the universal ribosomal protein uL30 family.</text>
</comment>